<proteinExistence type="inferred from homology"/>
<comment type="function">
    <text evidence="1">Catalyzes the ATP-dependent amination of UTP to CTP with either L-glutamine or ammonia as the source of nitrogen. Regulates intracellular CTP levels through interactions with the four ribonucleotide triphosphates.</text>
</comment>
<comment type="catalytic activity">
    <reaction evidence="1">
        <text>UTP + L-glutamine + ATP + H2O = CTP + L-glutamate + ADP + phosphate + 2 H(+)</text>
        <dbReference type="Rhea" id="RHEA:26426"/>
        <dbReference type="ChEBI" id="CHEBI:15377"/>
        <dbReference type="ChEBI" id="CHEBI:15378"/>
        <dbReference type="ChEBI" id="CHEBI:29985"/>
        <dbReference type="ChEBI" id="CHEBI:30616"/>
        <dbReference type="ChEBI" id="CHEBI:37563"/>
        <dbReference type="ChEBI" id="CHEBI:43474"/>
        <dbReference type="ChEBI" id="CHEBI:46398"/>
        <dbReference type="ChEBI" id="CHEBI:58359"/>
        <dbReference type="ChEBI" id="CHEBI:456216"/>
        <dbReference type="EC" id="6.3.4.2"/>
    </reaction>
</comment>
<comment type="catalytic activity">
    <reaction evidence="1">
        <text>L-glutamine + H2O = L-glutamate + NH4(+)</text>
        <dbReference type="Rhea" id="RHEA:15889"/>
        <dbReference type="ChEBI" id="CHEBI:15377"/>
        <dbReference type="ChEBI" id="CHEBI:28938"/>
        <dbReference type="ChEBI" id="CHEBI:29985"/>
        <dbReference type="ChEBI" id="CHEBI:58359"/>
    </reaction>
</comment>
<comment type="catalytic activity">
    <reaction evidence="1">
        <text>UTP + NH4(+) + ATP = CTP + ADP + phosphate + 2 H(+)</text>
        <dbReference type="Rhea" id="RHEA:16597"/>
        <dbReference type="ChEBI" id="CHEBI:15378"/>
        <dbReference type="ChEBI" id="CHEBI:28938"/>
        <dbReference type="ChEBI" id="CHEBI:30616"/>
        <dbReference type="ChEBI" id="CHEBI:37563"/>
        <dbReference type="ChEBI" id="CHEBI:43474"/>
        <dbReference type="ChEBI" id="CHEBI:46398"/>
        <dbReference type="ChEBI" id="CHEBI:456216"/>
    </reaction>
</comment>
<comment type="activity regulation">
    <text evidence="1">Allosterically activated by GTP, when glutamine is the substrate; GTP has no effect on the reaction when ammonia is the substrate. The allosteric effector GTP functions by stabilizing the protein conformation that binds the tetrahedral intermediate(s) formed during glutamine hydrolysis. Inhibited by the product CTP, via allosteric rather than competitive inhibition.</text>
</comment>
<comment type="pathway">
    <text evidence="1">Pyrimidine metabolism; CTP biosynthesis via de novo pathway; CTP from UDP: step 2/2.</text>
</comment>
<comment type="subunit">
    <text evidence="1">Homotetramer.</text>
</comment>
<comment type="miscellaneous">
    <text evidence="1">CTPSs have evolved a hybrid strategy for distinguishing between UTP and CTP. The overlapping regions of the product feedback inhibitory and substrate sites recognize a common feature in both compounds, the triphosphate moiety. To differentiate isosteric substrate and product pyrimidine rings, an additional pocket far from the expected kinase/ligase catalytic site, specifically recognizes the cytosine and ribose portions of the product inhibitor.</text>
</comment>
<comment type="similarity">
    <text evidence="1">Belongs to the CTP synthase family.</text>
</comment>
<organism>
    <name type="scientific">Yersinia pestis bv. Antiqua (strain Antiqua)</name>
    <dbReference type="NCBI Taxonomy" id="360102"/>
    <lineage>
        <taxon>Bacteria</taxon>
        <taxon>Pseudomonadati</taxon>
        <taxon>Pseudomonadota</taxon>
        <taxon>Gammaproteobacteria</taxon>
        <taxon>Enterobacterales</taxon>
        <taxon>Yersiniaceae</taxon>
        <taxon>Yersinia</taxon>
    </lineage>
</organism>
<reference key="1">
    <citation type="journal article" date="2006" name="J. Bacteriol.">
        <title>Complete genome sequence of Yersinia pestis strains Antiqua and Nepal516: evidence of gene reduction in an emerging pathogen.</title>
        <authorList>
            <person name="Chain P.S.G."/>
            <person name="Hu P."/>
            <person name="Malfatti S.A."/>
            <person name="Radnedge L."/>
            <person name="Larimer F."/>
            <person name="Vergez L.M."/>
            <person name="Worsham P."/>
            <person name="Chu M.C."/>
            <person name="Andersen G.L."/>
        </authorList>
    </citation>
    <scope>NUCLEOTIDE SEQUENCE [LARGE SCALE GENOMIC DNA]</scope>
    <source>
        <strain>Antiqua</strain>
    </source>
</reference>
<accession>Q1C3Y5</accession>
<evidence type="ECO:0000255" key="1">
    <source>
        <dbReference type="HAMAP-Rule" id="MF_01227"/>
    </source>
</evidence>
<gene>
    <name evidence="1" type="primary">pyrG</name>
    <name type="ordered locus">YPA_2875</name>
</gene>
<protein>
    <recommendedName>
        <fullName evidence="1">CTP synthase</fullName>
        <ecNumber evidence="1">6.3.4.2</ecNumber>
    </recommendedName>
    <alternativeName>
        <fullName evidence="1">Cytidine 5'-triphosphate synthase</fullName>
    </alternativeName>
    <alternativeName>
        <fullName evidence="1">Cytidine triphosphate synthetase</fullName>
        <shortName evidence="1">CTP synthetase</shortName>
        <shortName evidence="1">CTPS</shortName>
    </alternativeName>
    <alternativeName>
        <fullName evidence="1">UTP--ammonia ligase</fullName>
    </alternativeName>
</protein>
<keyword id="KW-0067">ATP-binding</keyword>
<keyword id="KW-0315">Glutamine amidotransferase</keyword>
<keyword id="KW-0436">Ligase</keyword>
<keyword id="KW-0460">Magnesium</keyword>
<keyword id="KW-0479">Metal-binding</keyword>
<keyword id="KW-0547">Nucleotide-binding</keyword>
<keyword id="KW-0665">Pyrimidine biosynthesis</keyword>
<dbReference type="EC" id="6.3.4.2" evidence="1"/>
<dbReference type="EMBL" id="CP000308">
    <property type="protein sequence ID" value="ABG14837.1"/>
    <property type="molecule type" value="Genomic_DNA"/>
</dbReference>
<dbReference type="RefSeq" id="WP_002209376.1">
    <property type="nucleotide sequence ID" value="NZ_CP009906.1"/>
</dbReference>
<dbReference type="SMR" id="Q1C3Y5"/>
<dbReference type="GeneID" id="96664251"/>
<dbReference type="KEGG" id="ypa:YPA_2875"/>
<dbReference type="UniPathway" id="UPA00159">
    <property type="reaction ID" value="UER00277"/>
</dbReference>
<dbReference type="Proteomes" id="UP000001971">
    <property type="component" value="Chromosome"/>
</dbReference>
<dbReference type="GO" id="GO:0005829">
    <property type="term" value="C:cytosol"/>
    <property type="evidence" value="ECO:0007669"/>
    <property type="project" value="TreeGrafter"/>
</dbReference>
<dbReference type="GO" id="GO:0005524">
    <property type="term" value="F:ATP binding"/>
    <property type="evidence" value="ECO:0007669"/>
    <property type="project" value="UniProtKB-KW"/>
</dbReference>
<dbReference type="GO" id="GO:0003883">
    <property type="term" value="F:CTP synthase activity"/>
    <property type="evidence" value="ECO:0007669"/>
    <property type="project" value="UniProtKB-UniRule"/>
</dbReference>
<dbReference type="GO" id="GO:0004359">
    <property type="term" value="F:glutaminase activity"/>
    <property type="evidence" value="ECO:0007669"/>
    <property type="project" value="RHEA"/>
</dbReference>
<dbReference type="GO" id="GO:0042802">
    <property type="term" value="F:identical protein binding"/>
    <property type="evidence" value="ECO:0007669"/>
    <property type="project" value="TreeGrafter"/>
</dbReference>
<dbReference type="GO" id="GO:0046872">
    <property type="term" value="F:metal ion binding"/>
    <property type="evidence" value="ECO:0007669"/>
    <property type="project" value="UniProtKB-KW"/>
</dbReference>
<dbReference type="GO" id="GO:0044210">
    <property type="term" value="P:'de novo' CTP biosynthetic process"/>
    <property type="evidence" value="ECO:0007669"/>
    <property type="project" value="UniProtKB-UniRule"/>
</dbReference>
<dbReference type="GO" id="GO:0019856">
    <property type="term" value="P:pyrimidine nucleobase biosynthetic process"/>
    <property type="evidence" value="ECO:0007669"/>
    <property type="project" value="TreeGrafter"/>
</dbReference>
<dbReference type="CDD" id="cd03113">
    <property type="entry name" value="CTPS_N"/>
    <property type="match status" value="1"/>
</dbReference>
<dbReference type="CDD" id="cd01746">
    <property type="entry name" value="GATase1_CTP_Synthase"/>
    <property type="match status" value="1"/>
</dbReference>
<dbReference type="FunFam" id="3.40.50.300:FF:000009">
    <property type="entry name" value="CTP synthase"/>
    <property type="match status" value="1"/>
</dbReference>
<dbReference type="FunFam" id="3.40.50.880:FF:000002">
    <property type="entry name" value="CTP synthase"/>
    <property type="match status" value="1"/>
</dbReference>
<dbReference type="Gene3D" id="3.40.50.880">
    <property type="match status" value="1"/>
</dbReference>
<dbReference type="Gene3D" id="3.40.50.300">
    <property type="entry name" value="P-loop containing nucleotide triphosphate hydrolases"/>
    <property type="match status" value="1"/>
</dbReference>
<dbReference type="HAMAP" id="MF_01227">
    <property type="entry name" value="PyrG"/>
    <property type="match status" value="1"/>
</dbReference>
<dbReference type="InterPro" id="IPR029062">
    <property type="entry name" value="Class_I_gatase-like"/>
</dbReference>
<dbReference type="InterPro" id="IPR004468">
    <property type="entry name" value="CTP_synthase"/>
</dbReference>
<dbReference type="InterPro" id="IPR017456">
    <property type="entry name" value="CTP_synthase_N"/>
</dbReference>
<dbReference type="InterPro" id="IPR017926">
    <property type="entry name" value="GATASE"/>
</dbReference>
<dbReference type="InterPro" id="IPR033828">
    <property type="entry name" value="GATase1_CTP_Synthase"/>
</dbReference>
<dbReference type="InterPro" id="IPR027417">
    <property type="entry name" value="P-loop_NTPase"/>
</dbReference>
<dbReference type="NCBIfam" id="NF003792">
    <property type="entry name" value="PRK05380.1"/>
    <property type="match status" value="1"/>
</dbReference>
<dbReference type="NCBIfam" id="TIGR00337">
    <property type="entry name" value="PyrG"/>
    <property type="match status" value="1"/>
</dbReference>
<dbReference type="PANTHER" id="PTHR11550">
    <property type="entry name" value="CTP SYNTHASE"/>
    <property type="match status" value="1"/>
</dbReference>
<dbReference type="PANTHER" id="PTHR11550:SF0">
    <property type="entry name" value="CTP SYNTHASE-RELATED"/>
    <property type="match status" value="1"/>
</dbReference>
<dbReference type="Pfam" id="PF06418">
    <property type="entry name" value="CTP_synth_N"/>
    <property type="match status" value="1"/>
</dbReference>
<dbReference type="Pfam" id="PF00117">
    <property type="entry name" value="GATase"/>
    <property type="match status" value="1"/>
</dbReference>
<dbReference type="SUPFAM" id="SSF52317">
    <property type="entry name" value="Class I glutamine amidotransferase-like"/>
    <property type="match status" value="1"/>
</dbReference>
<dbReference type="SUPFAM" id="SSF52540">
    <property type="entry name" value="P-loop containing nucleoside triphosphate hydrolases"/>
    <property type="match status" value="1"/>
</dbReference>
<dbReference type="PROSITE" id="PS51273">
    <property type="entry name" value="GATASE_TYPE_1"/>
    <property type="match status" value="1"/>
</dbReference>
<sequence length="545" mass="60363">MTTNYIFVTGGVVSSLGKGIAAASLAAILEARGLNVTIMKLDPYINVDPGTMSPTQHGEVFVTEDGAETDLDLGHYERFIRTKMTRRNNFTTGRIYSEVLRKERRGDYLGATIQVIPHITNAIKERIIEGGEGHDVVLVEIGGTVGDIESLPFLEAIRQMAVDVGREHTLYMHLTLVPYLAAAGEVKTKPTQHSVKELLSIGIQPDVLICRSDRAVPANERAKIALFCNVPEKAVISLKDVDSIYKIPGLLKSQGLDDYICKRFSLTCPEANLAEWEQVLYEESNPGGEVTIGMIGKYVELPDAYKSVIEALKHGGLKNRLTVNIKLIDSQDVETRGEEMLKELDAILIPGGFGYRGVEGKVLAARYAREHNIPYLGICLGMQVALMEFARNVAGMENANSTEFVPDCKYPVVALITEWRDEDGNVEIRTEESDLGGTMRVGGQQCHLTEGSLVRQMYGEPTIVERHRHRYEVNNMLLKQIEAAGLRVAGRSADNKLVEIIELPDHPWFVACQFHPEFTSTPRDGHPLFAGFVKAAGDYQKRQVK</sequence>
<feature type="chain" id="PRO_0000266267" description="CTP synthase">
    <location>
        <begin position="1"/>
        <end position="545"/>
    </location>
</feature>
<feature type="domain" description="Glutamine amidotransferase type-1" evidence="1">
    <location>
        <begin position="291"/>
        <end position="542"/>
    </location>
</feature>
<feature type="region of interest" description="Amidoligase domain" evidence="1">
    <location>
        <begin position="1"/>
        <end position="266"/>
    </location>
</feature>
<feature type="active site" description="Nucleophile; for glutamine hydrolysis" evidence="1">
    <location>
        <position position="379"/>
    </location>
</feature>
<feature type="active site" evidence="1">
    <location>
        <position position="515"/>
    </location>
</feature>
<feature type="active site" evidence="1">
    <location>
        <position position="517"/>
    </location>
</feature>
<feature type="binding site" evidence="1">
    <location>
        <position position="14"/>
    </location>
    <ligand>
        <name>CTP</name>
        <dbReference type="ChEBI" id="CHEBI:37563"/>
        <note>allosteric inhibitor</note>
    </ligand>
</feature>
<feature type="binding site" evidence="1">
    <location>
        <position position="14"/>
    </location>
    <ligand>
        <name>UTP</name>
        <dbReference type="ChEBI" id="CHEBI:46398"/>
    </ligand>
</feature>
<feature type="binding site" evidence="1">
    <location>
        <begin position="15"/>
        <end position="20"/>
    </location>
    <ligand>
        <name>ATP</name>
        <dbReference type="ChEBI" id="CHEBI:30616"/>
    </ligand>
</feature>
<feature type="binding site" evidence="1">
    <location>
        <position position="72"/>
    </location>
    <ligand>
        <name>ATP</name>
        <dbReference type="ChEBI" id="CHEBI:30616"/>
    </ligand>
</feature>
<feature type="binding site" evidence="1">
    <location>
        <position position="72"/>
    </location>
    <ligand>
        <name>Mg(2+)</name>
        <dbReference type="ChEBI" id="CHEBI:18420"/>
    </ligand>
</feature>
<feature type="binding site" evidence="1">
    <location>
        <position position="140"/>
    </location>
    <ligand>
        <name>Mg(2+)</name>
        <dbReference type="ChEBI" id="CHEBI:18420"/>
    </ligand>
</feature>
<feature type="binding site" evidence="1">
    <location>
        <begin position="147"/>
        <end position="149"/>
    </location>
    <ligand>
        <name>CTP</name>
        <dbReference type="ChEBI" id="CHEBI:37563"/>
        <note>allosteric inhibitor</note>
    </ligand>
</feature>
<feature type="binding site" evidence="1">
    <location>
        <begin position="187"/>
        <end position="192"/>
    </location>
    <ligand>
        <name>CTP</name>
        <dbReference type="ChEBI" id="CHEBI:37563"/>
        <note>allosteric inhibitor</note>
    </ligand>
</feature>
<feature type="binding site" evidence="1">
    <location>
        <begin position="187"/>
        <end position="192"/>
    </location>
    <ligand>
        <name>UTP</name>
        <dbReference type="ChEBI" id="CHEBI:46398"/>
    </ligand>
</feature>
<feature type="binding site" evidence="1">
    <location>
        <position position="223"/>
    </location>
    <ligand>
        <name>CTP</name>
        <dbReference type="ChEBI" id="CHEBI:37563"/>
        <note>allosteric inhibitor</note>
    </ligand>
</feature>
<feature type="binding site" evidence="1">
    <location>
        <position position="223"/>
    </location>
    <ligand>
        <name>UTP</name>
        <dbReference type="ChEBI" id="CHEBI:46398"/>
    </ligand>
</feature>
<feature type="binding site" evidence="1">
    <location>
        <begin position="239"/>
        <end position="241"/>
    </location>
    <ligand>
        <name>ATP</name>
        <dbReference type="ChEBI" id="CHEBI:30616"/>
    </ligand>
</feature>
<feature type="binding site" evidence="1">
    <location>
        <position position="352"/>
    </location>
    <ligand>
        <name>L-glutamine</name>
        <dbReference type="ChEBI" id="CHEBI:58359"/>
    </ligand>
</feature>
<feature type="binding site" evidence="1">
    <location>
        <begin position="380"/>
        <end position="383"/>
    </location>
    <ligand>
        <name>L-glutamine</name>
        <dbReference type="ChEBI" id="CHEBI:58359"/>
    </ligand>
</feature>
<feature type="binding site" evidence="1">
    <location>
        <position position="403"/>
    </location>
    <ligand>
        <name>L-glutamine</name>
        <dbReference type="ChEBI" id="CHEBI:58359"/>
    </ligand>
</feature>
<feature type="binding site" evidence="1">
    <location>
        <position position="470"/>
    </location>
    <ligand>
        <name>L-glutamine</name>
        <dbReference type="ChEBI" id="CHEBI:58359"/>
    </ligand>
</feature>
<name>PYRG_YERPA</name>